<proteinExistence type="inferred from homology"/>
<protein>
    <recommendedName>
        <fullName evidence="1">tRNA dimethylallyltransferase</fullName>
        <ecNumber evidence="1">2.5.1.75</ecNumber>
    </recommendedName>
    <alternativeName>
        <fullName evidence="1">Dimethylallyl diphosphate:tRNA dimethylallyltransferase</fullName>
        <shortName evidence="1">DMAPP:tRNA dimethylallyltransferase</shortName>
        <shortName evidence="1">DMATase</shortName>
    </alternativeName>
    <alternativeName>
        <fullName evidence="1">Isopentenyl-diphosphate:tRNA isopentenyltransferase</fullName>
        <shortName evidence="1">IPP transferase</shortName>
        <shortName evidence="1">IPPT</shortName>
        <shortName evidence="1">IPTase</shortName>
    </alternativeName>
</protein>
<reference key="1">
    <citation type="submission" date="2009-01" db="EMBL/GenBank/DDBJ databases">
        <title>Complete sequence of chromosome of Arthrobacter chlorophenolicus A6.</title>
        <authorList>
            <consortium name="US DOE Joint Genome Institute"/>
            <person name="Lucas S."/>
            <person name="Copeland A."/>
            <person name="Lapidus A."/>
            <person name="Glavina del Rio T."/>
            <person name="Tice H."/>
            <person name="Bruce D."/>
            <person name="Goodwin L."/>
            <person name="Pitluck S."/>
            <person name="Goltsman E."/>
            <person name="Clum A."/>
            <person name="Larimer F."/>
            <person name="Land M."/>
            <person name="Hauser L."/>
            <person name="Kyrpides N."/>
            <person name="Mikhailova N."/>
            <person name="Jansson J."/>
            <person name="Richardson P."/>
        </authorList>
    </citation>
    <scope>NUCLEOTIDE SEQUENCE [LARGE SCALE GENOMIC DNA]</scope>
    <source>
        <strain>ATCC 700700 / DSM 12829 / CIP 107037 / JCM 12360 / KCTC 9906 / NCIMB 13794 / A6</strain>
    </source>
</reference>
<evidence type="ECO:0000255" key="1">
    <source>
        <dbReference type="HAMAP-Rule" id="MF_00185"/>
    </source>
</evidence>
<comment type="function">
    <text evidence="1">Catalyzes the transfer of a dimethylallyl group onto the adenine at position 37 in tRNAs that read codons beginning with uridine, leading to the formation of N6-(dimethylallyl)adenosine (i(6)A).</text>
</comment>
<comment type="catalytic activity">
    <reaction evidence="1">
        <text>adenosine(37) in tRNA + dimethylallyl diphosphate = N(6)-dimethylallyladenosine(37) in tRNA + diphosphate</text>
        <dbReference type="Rhea" id="RHEA:26482"/>
        <dbReference type="Rhea" id="RHEA-COMP:10162"/>
        <dbReference type="Rhea" id="RHEA-COMP:10375"/>
        <dbReference type="ChEBI" id="CHEBI:33019"/>
        <dbReference type="ChEBI" id="CHEBI:57623"/>
        <dbReference type="ChEBI" id="CHEBI:74411"/>
        <dbReference type="ChEBI" id="CHEBI:74415"/>
        <dbReference type="EC" id="2.5.1.75"/>
    </reaction>
</comment>
<comment type="cofactor">
    <cofactor evidence="1">
        <name>Mg(2+)</name>
        <dbReference type="ChEBI" id="CHEBI:18420"/>
    </cofactor>
</comment>
<comment type="subunit">
    <text evidence="1">Monomer.</text>
</comment>
<comment type="similarity">
    <text evidence="1">Belongs to the IPP transferase family.</text>
</comment>
<name>MIAA_PSECP</name>
<keyword id="KW-0067">ATP-binding</keyword>
<keyword id="KW-0460">Magnesium</keyword>
<keyword id="KW-0547">Nucleotide-binding</keyword>
<keyword id="KW-0808">Transferase</keyword>
<keyword id="KW-0819">tRNA processing</keyword>
<feature type="chain" id="PRO_0000377069" description="tRNA dimethylallyltransferase">
    <location>
        <begin position="1"/>
        <end position="299"/>
    </location>
</feature>
<feature type="binding site" evidence="1">
    <location>
        <begin position="11"/>
        <end position="18"/>
    </location>
    <ligand>
        <name>ATP</name>
        <dbReference type="ChEBI" id="CHEBI:30616"/>
    </ligand>
</feature>
<feature type="binding site" evidence="1">
    <location>
        <begin position="13"/>
        <end position="18"/>
    </location>
    <ligand>
        <name>substrate</name>
    </ligand>
</feature>
<feature type="site" description="Interaction with substrate tRNA" evidence="1">
    <location>
        <position position="102"/>
    </location>
</feature>
<feature type="site" description="Interaction with substrate tRNA" evidence="1">
    <location>
        <position position="123"/>
    </location>
</feature>
<gene>
    <name evidence="1" type="primary">miaA</name>
    <name type="ordered locus">Achl_1465</name>
</gene>
<accession>B8HG92</accession>
<organism>
    <name type="scientific">Pseudarthrobacter chlorophenolicus (strain ATCC 700700 / DSM 12829 / CIP 107037 / JCM 12360 / KCTC 9906 / NCIMB 13794 / A6)</name>
    <name type="common">Arthrobacter chlorophenolicus</name>
    <dbReference type="NCBI Taxonomy" id="452863"/>
    <lineage>
        <taxon>Bacteria</taxon>
        <taxon>Bacillati</taxon>
        <taxon>Actinomycetota</taxon>
        <taxon>Actinomycetes</taxon>
        <taxon>Micrococcales</taxon>
        <taxon>Micrococcaceae</taxon>
        <taxon>Pseudarthrobacter</taxon>
    </lineage>
</organism>
<sequence>MGTPPVIAVVGPTGSGKSDLAVNLALELDGEVINADAMQFYRGMDIGTAKITPAERRGIPHHLLDILDVTQEASVSDFQDQARRLIGDIHSRGKRAILVGGSGLYVRAALDILEFPGTDPALRRRLEDDLAAHGTATLRARLQDVDPVSAERLSDDRRIIRALEVHELTGRPFSSFMPRREYFQPAVQVGLSVDRAALHERLAARVHAMVDSGLQAEVRRLDGLGLRTGKTACRALGYSQFLQVLDGSATVAEAAESTIVATRQFARRQLTWFRADPRITWIDWQDPDLVARAAGLCSQ</sequence>
<dbReference type="EC" id="2.5.1.75" evidence="1"/>
<dbReference type="EMBL" id="CP001341">
    <property type="protein sequence ID" value="ACL39454.1"/>
    <property type="molecule type" value="Genomic_DNA"/>
</dbReference>
<dbReference type="RefSeq" id="WP_015936676.1">
    <property type="nucleotide sequence ID" value="NC_011886.1"/>
</dbReference>
<dbReference type="SMR" id="B8HG92"/>
<dbReference type="STRING" id="452863.Achl_1465"/>
<dbReference type="KEGG" id="ach:Achl_1465"/>
<dbReference type="eggNOG" id="COG0324">
    <property type="taxonomic scope" value="Bacteria"/>
</dbReference>
<dbReference type="HOGENOM" id="CLU_032616_0_1_11"/>
<dbReference type="OrthoDB" id="9776390at2"/>
<dbReference type="Proteomes" id="UP000002505">
    <property type="component" value="Chromosome"/>
</dbReference>
<dbReference type="GO" id="GO:0005524">
    <property type="term" value="F:ATP binding"/>
    <property type="evidence" value="ECO:0007669"/>
    <property type="project" value="UniProtKB-UniRule"/>
</dbReference>
<dbReference type="GO" id="GO:0052381">
    <property type="term" value="F:tRNA dimethylallyltransferase activity"/>
    <property type="evidence" value="ECO:0007669"/>
    <property type="project" value="UniProtKB-UniRule"/>
</dbReference>
<dbReference type="GO" id="GO:0006400">
    <property type="term" value="P:tRNA modification"/>
    <property type="evidence" value="ECO:0007669"/>
    <property type="project" value="TreeGrafter"/>
</dbReference>
<dbReference type="Gene3D" id="1.10.20.140">
    <property type="match status" value="1"/>
</dbReference>
<dbReference type="Gene3D" id="3.40.50.300">
    <property type="entry name" value="P-loop containing nucleotide triphosphate hydrolases"/>
    <property type="match status" value="1"/>
</dbReference>
<dbReference type="HAMAP" id="MF_00185">
    <property type="entry name" value="IPP_trans"/>
    <property type="match status" value="1"/>
</dbReference>
<dbReference type="InterPro" id="IPR039657">
    <property type="entry name" value="Dimethylallyltransferase"/>
</dbReference>
<dbReference type="InterPro" id="IPR018022">
    <property type="entry name" value="IPT"/>
</dbReference>
<dbReference type="InterPro" id="IPR027417">
    <property type="entry name" value="P-loop_NTPase"/>
</dbReference>
<dbReference type="NCBIfam" id="TIGR00174">
    <property type="entry name" value="miaA"/>
    <property type="match status" value="1"/>
</dbReference>
<dbReference type="PANTHER" id="PTHR11088">
    <property type="entry name" value="TRNA DIMETHYLALLYLTRANSFERASE"/>
    <property type="match status" value="1"/>
</dbReference>
<dbReference type="PANTHER" id="PTHR11088:SF60">
    <property type="entry name" value="TRNA DIMETHYLALLYLTRANSFERASE"/>
    <property type="match status" value="1"/>
</dbReference>
<dbReference type="Pfam" id="PF01715">
    <property type="entry name" value="IPPT"/>
    <property type="match status" value="1"/>
</dbReference>
<dbReference type="SUPFAM" id="SSF52540">
    <property type="entry name" value="P-loop containing nucleoside triphosphate hydrolases"/>
    <property type="match status" value="2"/>
</dbReference>